<dbReference type="EMBL" id="AY007127">
    <property type="protein sequence ID" value="AAG01993.1"/>
    <property type="molecule type" value="mRNA"/>
</dbReference>
<dbReference type="EMBL" id="D21261">
    <property type="protein sequence ID" value="BAA04802.2"/>
    <property type="status" value="ALT_INIT"/>
    <property type="molecule type" value="mRNA"/>
</dbReference>
<dbReference type="EMBL" id="GU727636">
    <property type="protein sequence ID" value="ADU87638.1"/>
    <property type="molecule type" value="mRNA"/>
</dbReference>
<dbReference type="EMBL" id="AK291562">
    <property type="protein sequence ID" value="BAF84251.1"/>
    <property type="molecule type" value="mRNA"/>
</dbReference>
<dbReference type="EMBL" id="CR542126">
    <property type="protein sequence ID" value="CAG46923.1"/>
    <property type="molecule type" value="mRNA"/>
</dbReference>
<dbReference type="EMBL" id="CR542136">
    <property type="protein sequence ID" value="CAG46933.1"/>
    <property type="molecule type" value="mRNA"/>
</dbReference>
<dbReference type="EMBL" id="AL513485">
    <property type="status" value="NOT_ANNOTATED_CDS"/>
    <property type="molecule type" value="Genomic_DNA"/>
</dbReference>
<dbReference type="EMBL" id="CH471121">
    <property type="protein sequence ID" value="EAW52760.1"/>
    <property type="molecule type" value="Genomic_DNA"/>
</dbReference>
<dbReference type="EMBL" id="BC002616">
    <property type="protein sequence ID" value="AAH02616.1"/>
    <property type="molecule type" value="mRNA"/>
</dbReference>
<dbReference type="EMBL" id="BC009357">
    <property type="protein sequence ID" value="AAH09357.1"/>
    <property type="molecule type" value="mRNA"/>
</dbReference>
<dbReference type="CCDS" id="CCDS1189.1">
    <molecule id="P37802-1"/>
</dbReference>
<dbReference type="CCDS" id="CCDS60314.1">
    <molecule id="P37802-2"/>
</dbReference>
<dbReference type="RefSeq" id="NP_001264152.1">
    <molecule id="P37802-1"/>
    <property type="nucleotide sequence ID" value="NM_001277223.2"/>
</dbReference>
<dbReference type="RefSeq" id="NP_001264153.1">
    <molecule id="P37802-2"/>
    <property type="nucleotide sequence ID" value="NM_001277224.2"/>
</dbReference>
<dbReference type="RefSeq" id="NP_003555.1">
    <molecule id="P37802-1"/>
    <property type="nucleotide sequence ID" value="NM_003564.3"/>
</dbReference>
<dbReference type="PDB" id="1WYM">
    <property type="method" value="NMR"/>
    <property type="chains" value="A=16-157"/>
</dbReference>
<dbReference type="PDBsum" id="1WYM"/>
<dbReference type="SMR" id="P37802"/>
<dbReference type="BioGRID" id="113995">
    <property type="interactions" value="227"/>
</dbReference>
<dbReference type="FunCoup" id="P37802">
    <property type="interactions" value="402"/>
</dbReference>
<dbReference type="IntAct" id="P37802">
    <property type="interactions" value="59"/>
</dbReference>
<dbReference type="MINT" id="P37802"/>
<dbReference type="STRING" id="9606.ENSP00000357076"/>
<dbReference type="DrugBank" id="DB11638">
    <property type="generic name" value="Artenimol"/>
</dbReference>
<dbReference type="GlyGen" id="P37802">
    <property type="glycosylation" value="7 sites, 2 N-linked glycans (2 sites), 1 O-linked glycan (5 sites)"/>
</dbReference>
<dbReference type="iPTMnet" id="P37802"/>
<dbReference type="MetOSite" id="P37802"/>
<dbReference type="PhosphoSitePlus" id="P37802"/>
<dbReference type="SwissPalm" id="P37802"/>
<dbReference type="BioMuta" id="TAGLN2"/>
<dbReference type="DMDM" id="586000"/>
<dbReference type="OGP" id="P37802"/>
<dbReference type="REPRODUCTION-2DPAGE" id="P37802"/>
<dbReference type="jPOST" id="P37802"/>
<dbReference type="MassIVE" id="P37802"/>
<dbReference type="PaxDb" id="9606-ENSP00000357076"/>
<dbReference type="PeptideAtlas" id="P37802"/>
<dbReference type="PRIDE" id="P37802"/>
<dbReference type="ProteomicsDB" id="55277">
    <molecule id="P37802-1"/>
</dbReference>
<dbReference type="Pumba" id="P37802"/>
<dbReference type="TopDownProteomics" id="P37802-1">
    <molecule id="P37802-1"/>
</dbReference>
<dbReference type="Antibodypedia" id="1099">
    <property type="antibodies" value="247 antibodies from 31 providers"/>
</dbReference>
<dbReference type="DNASU" id="8407"/>
<dbReference type="Ensembl" id="ENST00000320307.8">
    <molecule id="P37802-1"/>
    <property type="protein sequence ID" value="ENSP00000357075.1"/>
    <property type="gene ID" value="ENSG00000158710.15"/>
</dbReference>
<dbReference type="Ensembl" id="ENST00000368096.5">
    <molecule id="P37802-2"/>
    <property type="protein sequence ID" value="ENSP00000357076.1"/>
    <property type="gene ID" value="ENSG00000158710.15"/>
</dbReference>
<dbReference type="Ensembl" id="ENST00000368097.9">
    <molecule id="P37802-1"/>
    <property type="protein sequence ID" value="ENSP00000357077.5"/>
    <property type="gene ID" value="ENSG00000158710.15"/>
</dbReference>
<dbReference type="GeneID" id="8407"/>
<dbReference type="KEGG" id="hsa:8407"/>
<dbReference type="MANE-Select" id="ENST00000368097.9">
    <property type="protein sequence ID" value="ENSP00000357077.5"/>
    <property type="RefSeq nucleotide sequence ID" value="NM_003564.3"/>
    <property type="RefSeq protein sequence ID" value="NP_003555.1"/>
</dbReference>
<dbReference type="UCSC" id="uc001fun.3">
    <molecule id="P37802-1"/>
    <property type="organism name" value="human"/>
</dbReference>
<dbReference type="AGR" id="HGNC:11554"/>
<dbReference type="CTD" id="8407"/>
<dbReference type="DisGeNET" id="8407"/>
<dbReference type="GeneCards" id="TAGLN2"/>
<dbReference type="HGNC" id="HGNC:11554">
    <property type="gene designation" value="TAGLN2"/>
</dbReference>
<dbReference type="HPA" id="ENSG00000158710">
    <property type="expression patterns" value="Low tissue specificity"/>
</dbReference>
<dbReference type="MIM" id="604634">
    <property type="type" value="gene"/>
</dbReference>
<dbReference type="neXtProt" id="NX_P37802"/>
<dbReference type="OpenTargets" id="ENSG00000158710"/>
<dbReference type="PharmGKB" id="PA36325"/>
<dbReference type="VEuPathDB" id="HostDB:ENSG00000158710"/>
<dbReference type="eggNOG" id="KOG2046">
    <property type="taxonomic scope" value="Eukaryota"/>
</dbReference>
<dbReference type="GeneTree" id="ENSGT00940000158886"/>
<dbReference type="HOGENOM" id="CLU_055232_1_0_1"/>
<dbReference type="InParanoid" id="P37802"/>
<dbReference type="OMA" id="WIKTITG"/>
<dbReference type="OrthoDB" id="21595at2759"/>
<dbReference type="PAN-GO" id="P37802">
    <property type="GO annotations" value="1 GO annotation based on evolutionary models"/>
</dbReference>
<dbReference type="PhylomeDB" id="P37802"/>
<dbReference type="TreeFam" id="TF313921"/>
<dbReference type="PathwayCommons" id="P37802"/>
<dbReference type="Reactome" id="R-HSA-114608">
    <property type="pathway name" value="Platelet degranulation"/>
</dbReference>
<dbReference type="SignaLink" id="P37802"/>
<dbReference type="SIGNOR" id="P37802"/>
<dbReference type="BioGRID-ORCS" id="8407">
    <property type="hits" value="39 hits in 1153 CRISPR screens"/>
</dbReference>
<dbReference type="CD-CODE" id="DEE660B4">
    <property type="entry name" value="Stress granule"/>
</dbReference>
<dbReference type="CD-CODE" id="FB4E32DD">
    <property type="entry name" value="Presynaptic clusters and postsynaptic densities"/>
</dbReference>
<dbReference type="ChiTaRS" id="TAGLN2">
    <property type="organism name" value="human"/>
</dbReference>
<dbReference type="EvolutionaryTrace" id="P37802"/>
<dbReference type="GeneWiki" id="TAGLN2"/>
<dbReference type="GenomeRNAi" id="8407"/>
<dbReference type="Pharos" id="P37802">
    <property type="development level" value="Tbio"/>
</dbReference>
<dbReference type="PRO" id="PR:P37802"/>
<dbReference type="Proteomes" id="UP000005640">
    <property type="component" value="Chromosome 1"/>
</dbReference>
<dbReference type="RNAct" id="P37802">
    <property type="molecule type" value="protein"/>
</dbReference>
<dbReference type="Bgee" id="ENSG00000158710">
    <property type="expression patterns" value="Expressed in upper lobe of left lung and 181 other cell types or tissues"/>
</dbReference>
<dbReference type="ExpressionAtlas" id="P37802">
    <property type="expression patterns" value="baseline and differential"/>
</dbReference>
<dbReference type="GO" id="GO:0015629">
    <property type="term" value="C:actin cytoskeleton"/>
    <property type="evidence" value="ECO:0000318"/>
    <property type="project" value="GO_Central"/>
</dbReference>
<dbReference type="GO" id="GO:0005829">
    <property type="term" value="C:cytosol"/>
    <property type="evidence" value="ECO:0000304"/>
    <property type="project" value="Reactome"/>
</dbReference>
<dbReference type="GO" id="GO:0070062">
    <property type="term" value="C:extracellular exosome"/>
    <property type="evidence" value="ECO:0007005"/>
    <property type="project" value="UniProtKB"/>
</dbReference>
<dbReference type="GO" id="GO:0005576">
    <property type="term" value="C:extracellular region"/>
    <property type="evidence" value="ECO:0000304"/>
    <property type="project" value="Reactome"/>
</dbReference>
<dbReference type="GO" id="GO:0031982">
    <property type="term" value="C:vesicle"/>
    <property type="evidence" value="ECO:0007005"/>
    <property type="project" value="UniProtKB"/>
</dbReference>
<dbReference type="GO" id="GO:0051015">
    <property type="term" value="F:actin filament binding"/>
    <property type="evidence" value="ECO:0000318"/>
    <property type="project" value="GO_Central"/>
</dbReference>
<dbReference type="GO" id="GO:0045296">
    <property type="term" value="F:cadherin binding"/>
    <property type="evidence" value="ECO:0007005"/>
    <property type="project" value="BHF-UCL"/>
</dbReference>
<dbReference type="GO" id="GO:0007015">
    <property type="term" value="P:actin filament organization"/>
    <property type="evidence" value="ECO:0000318"/>
    <property type="project" value="GO_Central"/>
</dbReference>
<dbReference type="GO" id="GO:0030855">
    <property type="term" value="P:epithelial cell differentiation"/>
    <property type="evidence" value="ECO:0000314"/>
    <property type="project" value="UniProtKB"/>
</dbReference>
<dbReference type="CDD" id="cd21280">
    <property type="entry name" value="CH_TAGLN2"/>
    <property type="match status" value="1"/>
</dbReference>
<dbReference type="FunFam" id="1.10.418.10:FF:000039">
    <property type="entry name" value="Transgelin"/>
    <property type="match status" value="1"/>
</dbReference>
<dbReference type="Gene3D" id="1.10.418.10">
    <property type="entry name" value="Calponin-like domain"/>
    <property type="match status" value="1"/>
</dbReference>
<dbReference type="InterPro" id="IPR050606">
    <property type="entry name" value="Calponin-like"/>
</dbReference>
<dbReference type="InterPro" id="IPR000557">
    <property type="entry name" value="Calponin_repeat"/>
</dbReference>
<dbReference type="InterPro" id="IPR001715">
    <property type="entry name" value="CH_dom"/>
</dbReference>
<dbReference type="InterPro" id="IPR036872">
    <property type="entry name" value="CH_dom_sf"/>
</dbReference>
<dbReference type="InterPro" id="IPR003096">
    <property type="entry name" value="SM22_calponin"/>
</dbReference>
<dbReference type="PANTHER" id="PTHR47385">
    <property type="entry name" value="CALPONIN"/>
    <property type="match status" value="1"/>
</dbReference>
<dbReference type="PANTHER" id="PTHR47385:SF20">
    <property type="entry name" value="TRANSGELIN-2"/>
    <property type="match status" value="1"/>
</dbReference>
<dbReference type="Pfam" id="PF00402">
    <property type="entry name" value="Calponin"/>
    <property type="match status" value="1"/>
</dbReference>
<dbReference type="Pfam" id="PF00307">
    <property type="entry name" value="CH"/>
    <property type="match status" value="1"/>
</dbReference>
<dbReference type="PRINTS" id="PR00888">
    <property type="entry name" value="SM22CALPONIN"/>
</dbReference>
<dbReference type="PRINTS" id="PR00890">
    <property type="entry name" value="TRANSGELIN"/>
</dbReference>
<dbReference type="SMART" id="SM00033">
    <property type="entry name" value="CH"/>
    <property type="match status" value="1"/>
</dbReference>
<dbReference type="SUPFAM" id="SSF47576">
    <property type="entry name" value="Calponin-homology domain, CH-domain"/>
    <property type="match status" value="1"/>
</dbReference>
<dbReference type="PROSITE" id="PS01052">
    <property type="entry name" value="CALPONIN_1"/>
    <property type="match status" value="1"/>
</dbReference>
<dbReference type="PROSITE" id="PS51122">
    <property type="entry name" value="CALPONIN_2"/>
    <property type="match status" value="1"/>
</dbReference>
<dbReference type="PROSITE" id="PS50021">
    <property type="entry name" value="CH"/>
    <property type="match status" value="1"/>
</dbReference>
<gene>
    <name type="primary">TAGLN2</name>
    <name type="synonym">KIAA0120</name>
    <name type="ORF">CDABP0035</name>
</gene>
<reference key="1">
    <citation type="submission" date="2000-07" db="EMBL/GenBank/DDBJ databases">
        <title>Pediatric leukemia cDNA sequencing project.</title>
        <authorList>
            <person name="Zhou J."/>
            <person name="Yu W."/>
            <person name="Tang H."/>
            <person name="Mei G."/>
            <person name="Tsang Y.T.M."/>
            <person name="Bouck J."/>
            <person name="Gibbs R.A."/>
            <person name="Margolin J.F."/>
        </authorList>
    </citation>
    <scope>NUCLEOTIDE SEQUENCE [LARGE SCALE MRNA] (ISOFORM 2)</scope>
    <source>
        <tissue>Leukemia</tissue>
    </source>
</reference>
<reference key="2">
    <citation type="journal article" date="1995" name="DNA Res.">
        <title>Prediction of the coding sequences of unidentified human genes. III. The coding sequences of 40 new genes (KIAA0081-KIAA0120) deduced by analysis of cDNA clones from human cell line KG-1.</title>
        <authorList>
            <person name="Nagase T."/>
            <person name="Miyajima N."/>
            <person name="Tanaka A."/>
            <person name="Sazuka T."/>
            <person name="Seki N."/>
            <person name="Sato S."/>
            <person name="Tabata S."/>
            <person name="Ishikawa K."/>
            <person name="Kawarabayasi Y."/>
            <person name="Kotani H."/>
            <person name="Nomura N."/>
        </authorList>
    </citation>
    <scope>NUCLEOTIDE SEQUENCE [LARGE SCALE MRNA] (ISOFORM 1)</scope>
    <source>
        <tissue>Bone marrow</tissue>
    </source>
</reference>
<reference key="3">
    <citation type="journal article" date="2010" name="Mol. Cell. Proteomics">
        <title>Systematic mapping and functional analysis of a family of human epididymal secretory sperm-located proteins.</title>
        <authorList>
            <person name="Li J."/>
            <person name="Liu F."/>
            <person name="Wang H."/>
            <person name="Liu X."/>
            <person name="Liu J."/>
            <person name="Li N."/>
            <person name="Wan F."/>
            <person name="Wang W."/>
            <person name="Zhang C."/>
            <person name="Jin S."/>
            <person name="Liu J."/>
            <person name="Zhu P."/>
            <person name="Liu Y."/>
        </authorList>
    </citation>
    <scope>NUCLEOTIDE SEQUENCE [MRNA] (ISOFORM 1)</scope>
    <scope>TISSUE SPECIFICITY</scope>
    <source>
        <tissue>Epididymis</tissue>
    </source>
</reference>
<reference key="4">
    <citation type="journal article" date="2004" name="Nat. Genet.">
        <title>Complete sequencing and characterization of 21,243 full-length human cDNAs.</title>
        <authorList>
            <person name="Ota T."/>
            <person name="Suzuki Y."/>
            <person name="Nishikawa T."/>
            <person name="Otsuki T."/>
            <person name="Sugiyama T."/>
            <person name="Irie R."/>
            <person name="Wakamatsu A."/>
            <person name="Hayashi K."/>
            <person name="Sato H."/>
            <person name="Nagai K."/>
            <person name="Kimura K."/>
            <person name="Makita H."/>
            <person name="Sekine M."/>
            <person name="Obayashi M."/>
            <person name="Nishi T."/>
            <person name="Shibahara T."/>
            <person name="Tanaka T."/>
            <person name="Ishii S."/>
            <person name="Yamamoto J."/>
            <person name="Saito K."/>
            <person name="Kawai Y."/>
            <person name="Isono Y."/>
            <person name="Nakamura Y."/>
            <person name="Nagahari K."/>
            <person name="Murakami K."/>
            <person name="Yasuda T."/>
            <person name="Iwayanagi T."/>
            <person name="Wagatsuma M."/>
            <person name="Shiratori A."/>
            <person name="Sudo H."/>
            <person name="Hosoiri T."/>
            <person name="Kaku Y."/>
            <person name="Kodaira H."/>
            <person name="Kondo H."/>
            <person name="Sugawara M."/>
            <person name="Takahashi M."/>
            <person name="Kanda K."/>
            <person name="Yokoi T."/>
            <person name="Furuya T."/>
            <person name="Kikkawa E."/>
            <person name="Omura Y."/>
            <person name="Abe K."/>
            <person name="Kamihara K."/>
            <person name="Katsuta N."/>
            <person name="Sato K."/>
            <person name="Tanikawa M."/>
            <person name="Yamazaki M."/>
            <person name="Ninomiya K."/>
            <person name="Ishibashi T."/>
            <person name="Yamashita H."/>
            <person name="Murakawa K."/>
            <person name="Fujimori K."/>
            <person name="Tanai H."/>
            <person name="Kimata M."/>
            <person name="Watanabe M."/>
            <person name="Hiraoka S."/>
            <person name="Chiba Y."/>
            <person name="Ishida S."/>
            <person name="Ono Y."/>
            <person name="Takiguchi S."/>
            <person name="Watanabe S."/>
            <person name="Yosida M."/>
            <person name="Hotuta T."/>
            <person name="Kusano J."/>
            <person name="Kanehori K."/>
            <person name="Takahashi-Fujii A."/>
            <person name="Hara H."/>
            <person name="Tanase T.-O."/>
            <person name="Nomura Y."/>
            <person name="Togiya S."/>
            <person name="Komai F."/>
            <person name="Hara R."/>
            <person name="Takeuchi K."/>
            <person name="Arita M."/>
            <person name="Imose N."/>
            <person name="Musashino K."/>
            <person name="Yuuki H."/>
            <person name="Oshima A."/>
            <person name="Sasaki N."/>
            <person name="Aotsuka S."/>
            <person name="Yoshikawa Y."/>
            <person name="Matsunawa H."/>
            <person name="Ichihara T."/>
            <person name="Shiohata N."/>
            <person name="Sano S."/>
            <person name="Moriya S."/>
            <person name="Momiyama H."/>
            <person name="Satoh N."/>
            <person name="Takami S."/>
            <person name="Terashima Y."/>
            <person name="Suzuki O."/>
            <person name="Nakagawa S."/>
            <person name="Senoh A."/>
            <person name="Mizoguchi H."/>
            <person name="Goto Y."/>
            <person name="Shimizu F."/>
            <person name="Wakebe H."/>
            <person name="Hishigaki H."/>
            <person name="Watanabe T."/>
            <person name="Sugiyama A."/>
            <person name="Takemoto M."/>
            <person name="Kawakami B."/>
            <person name="Yamazaki M."/>
            <person name="Watanabe K."/>
            <person name="Kumagai A."/>
            <person name="Itakura S."/>
            <person name="Fukuzumi Y."/>
            <person name="Fujimori Y."/>
            <person name="Komiyama M."/>
            <person name="Tashiro H."/>
            <person name="Tanigami A."/>
            <person name="Fujiwara T."/>
            <person name="Ono T."/>
            <person name="Yamada K."/>
            <person name="Fujii Y."/>
            <person name="Ozaki K."/>
            <person name="Hirao M."/>
            <person name="Ohmori Y."/>
            <person name="Kawabata A."/>
            <person name="Hikiji T."/>
            <person name="Kobatake N."/>
            <person name="Inagaki H."/>
            <person name="Ikema Y."/>
            <person name="Okamoto S."/>
            <person name="Okitani R."/>
            <person name="Kawakami T."/>
            <person name="Noguchi S."/>
            <person name="Itoh T."/>
            <person name="Shigeta K."/>
            <person name="Senba T."/>
            <person name="Matsumura K."/>
            <person name="Nakajima Y."/>
            <person name="Mizuno T."/>
            <person name="Morinaga M."/>
            <person name="Sasaki M."/>
            <person name="Togashi T."/>
            <person name="Oyama M."/>
            <person name="Hata H."/>
            <person name="Watanabe M."/>
            <person name="Komatsu T."/>
            <person name="Mizushima-Sugano J."/>
            <person name="Satoh T."/>
            <person name="Shirai Y."/>
            <person name="Takahashi Y."/>
            <person name="Nakagawa K."/>
            <person name="Okumura K."/>
            <person name="Nagase T."/>
            <person name="Nomura N."/>
            <person name="Kikuchi H."/>
            <person name="Masuho Y."/>
            <person name="Yamashita R."/>
            <person name="Nakai K."/>
            <person name="Yada T."/>
            <person name="Nakamura Y."/>
            <person name="Ohara O."/>
            <person name="Isogai T."/>
            <person name="Sugano S."/>
        </authorList>
    </citation>
    <scope>NUCLEOTIDE SEQUENCE [LARGE SCALE MRNA] (ISOFORM 1)</scope>
    <source>
        <tissue>Placenta</tissue>
    </source>
</reference>
<reference key="5">
    <citation type="submission" date="2004-06" db="EMBL/GenBank/DDBJ databases">
        <title>Cloning of human full open reading frames in Gateway(TM) system entry vector (pDONR201).</title>
        <authorList>
            <person name="Halleck A."/>
            <person name="Ebert L."/>
            <person name="Mkoundinya M."/>
            <person name="Schick M."/>
            <person name="Eisenstein S."/>
            <person name="Neubert P."/>
            <person name="Kstrang K."/>
            <person name="Schatten R."/>
            <person name="Shen B."/>
            <person name="Henze S."/>
            <person name="Mar W."/>
            <person name="Korn B."/>
            <person name="Zuo D."/>
            <person name="Hu Y."/>
            <person name="LaBaer J."/>
        </authorList>
    </citation>
    <scope>NUCLEOTIDE SEQUENCE [LARGE SCALE MRNA] (ISOFORM 1)</scope>
</reference>
<reference key="6">
    <citation type="journal article" date="2006" name="Nature">
        <title>The DNA sequence and biological annotation of human chromosome 1.</title>
        <authorList>
            <person name="Gregory S.G."/>
            <person name="Barlow K.F."/>
            <person name="McLay K.E."/>
            <person name="Kaul R."/>
            <person name="Swarbreck D."/>
            <person name="Dunham A."/>
            <person name="Scott C.E."/>
            <person name="Howe K.L."/>
            <person name="Woodfine K."/>
            <person name="Spencer C.C.A."/>
            <person name="Jones M.C."/>
            <person name="Gillson C."/>
            <person name="Searle S."/>
            <person name="Zhou Y."/>
            <person name="Kokocinski F."/>
            <person name="McDonald L."/>
            <person name="Evans R."/>
            <person name="Phillips K."/>
            <person name="Atkinson A."/>
            <person name="Cooper R."/>
            <person name="Jones C."/>
            <person name="Hall R.E."/>
            <person name="Andrews T.D."/>
            <person name="Lloyd C."/>
            <person name="Ainscough R."/>
            <person name="Almeida J.P."/>
            <person name="Ambrose K.D."/>
            <person name="Anderson F."/>
            <person name="Andrew R.W."/>
            <person name="Ashwell R.I.S."/>
            <person name="Aubin K."/>
            <person name="Babbage A.K."/>
            <person name="Bagguley C.L."/>
            <person name="Bailey J."/>
            <person name="Beasley H."/>
            <person name="Bethel G."/>
            <person name="Bird C.P."/>
            <person name="Bray-Allen S."/>
            <person name="Brown J.Y."/>
            <person name="Brown A.J."/>
            <person name="Buckley D."/>
            <person name="Burton J."/>
            <person name="Bye J."/>
            <person name="Carder C."/>
            <person name="Chapman J.C."/>
            <person name="Clark S.Y."/>
            <person name="Clarke G."/>
            <person name="Clee C."/>
            <person name="Cobley V."/>
            <person name="Collier R.E."/>
            <person name="Corby N."/>
            <person name="Coville G.J."/>
            <person name="Davies J."/>
            <person name="Deadman R."/>
            <person name="Dunn M."/>
            <person name="Earthrowl M."/>
            <person name="Ellington A.G."/>
            <person name="Errington H."/>
            <person name="Frankish A."/>
            <person name="Frankland J."/>
            <person name="French L."/>
            <person name="Garner P."/>
            <person name="Garnett J."/>
            <person name="Gay L."/>
            <person name="Ghori M.R.J."/>
            <person name="Gibson R."/>
            <person name="Gilby L.M."/>
            <person name="Gillett W."/>
            <person name="Glithero R.J."/>
            <person name="Grafham D.V."/>
            <person name="Griffiths C."/>
            <person name="Griffiths-Jones S."/>
            <person name="Grocock R."/>
            <person name="Hammond S."/>
            <person name="Harrison E.S.I."/>
            <person name="Hart E."/>
            <person name="Haugen E."/>
            <person name="Heath P.D."/>
            <person name="Holmes S."/>
            <person name="Holt K."/>
            <person name="Howden P.J."/>
            <person name="Hunt A.R."/>
            <person name="Hunt S.E."/>
            <person name="Hunter G."/>
            <person name="Isherwood J."/>
            <person name="James R."/>
            <person name="Johnson C."/>
            <person name="Johnson D."/>
            <person name="Joy A."/>
            <person name="Kay M."/>
            <person name="Kershaw J.K."/>
            <person name="Kibukawa M."/>
            <person name="Kimberley A.M."/>
            <person name="King A."/>
            <person name="Knights A.J."/>
            <person name="Lad H."/>
            <person name="Laird G."/>
            <person name="Lawlor S."/>
            <person name="Leongamornlert D.A."/>
            <person name="Lloyd D.M."/>
            <person name="Loveland J."/>
            <person name="Lovell J."/>
            <person name="Lush M.J."/>
            <person name="Lyne R."/>
            <person name="Martin S."/>
            <person name="Mashreghi-Mohammadi M."/>
            <person name="Matthews L."/>
            <person name="Matthews N.S.W."/>
            <person name="McLaren S."/>
            <person name="Milne S."/>
            <person name="Mistry S."/>
            <person name="Moore M.J.F."/>
            <person name="Nickerson T."/>
            <person name="O'Dell C.N."/>
            <person name="Oliver K."/>
            <person name="Palmeiri A."/>
            <person name="Palmer S.A."/>
            <person name="Parker A."/>
            <person name="Patel D."/>
            <person name="Pearce A.V."/>
            <person name="Peck A.I."/>
            <person name="Pelan S."/>
            <person name="Phelps K."/>
            <person name="Phillimore B.J."/>
            <person name="Plumb R."/>
            <person name="Rajan J."/>
            <person name="Raymond C."/>
            <person name="Rouse G."/>
            <person name="Saenphimmachak C."/>
            <person name="Sehra H.K."/>
            <person name="Sheridan E."/>
            <person name="Shownkeen R."/>
            <person name="Sims S."/>
            <person name="Skuce C.D."/>
            <person name="Smith M."/>
            <person name="Steward C."/>
            <person name="Subramanian S."/>
            <person name="Sycamore N."/>
            <person name="Tracey A."/>
            <person name="Tromans A."/>
            <person name="Van Helmond Z."/>
            <person name="Wall M."/>
            <person name="Wallis J.M."/>
            <person name="White S."/>
            <person name="Whitehead S.L."/>
            <person name="Wilkinson J.E."/>
            <person name="Willey D.L."/>
            <person name="Williams H."/>
            <person name="Wilming L."/>
            <person name="Wray P.W."/>
            <person name="Wu Z."/>
            <person name="Coulson A."/>
            <person name="Vaudin M."/>
            <person name="Sulston J.E."/>
            <person name="Durbin R.M."/>
            <person name="Hubbard T."/>
            <person name="Wooster R."/>
            <person name="Dunham I."/>
            <person name="Carter N.P."/>
            <person name="McVean G."/>
            <person name="Ross M.T."/>
            <person name="Harrow J."/>
            <person name="Olson M.V."/>
            <person name="Beck S."/>
            <person name="Rogers J."/>
            <person name="Bentley D.R."/>
        </authorList>
    </citation>
    <scope>NUCLEOTIDE SEQUENCE [LARGE SCALE GENOMIC DNA]</scope>
</reference>
<reference key="7">
    <citation type="submission" date="2005-09" db="EMBL/GenBank/DDBJ databases">
        <authorList>
            <person name="Mural R.J."/>
            <person name="Istrail S."/>
            <person name="Sutton G.G."/>
            <person name="Florea L."/>
            <person name="Halpern A.L."/>
            <person name="Mobarry C.M."/>
            <person name="Lippert R."/>
            <person name="Walenz B."/>
            <person name="Shatkay H."/>
            <person name="Dew I."/>
            <person name="Miller J.R."/>
            <person name="Flanigan M.J."/>
            <person name="Edwards N.J."/>
            <person name="Bolanos R."/>
            <person name="Fasulo D."/>
            <person name="Halldorsson B.V."/>
            <person name="Hannenhalli S."/>
            <person name="Turner R."/>
            <person name="Yooseph S."/>
            <person name="Lu F."/>
            <person name="Nusskern D.R."/>
            <person name="Shue B.C."/>
            <person name="Zheng X.H."/>
            <person name="Zhong F."/>
            <person name="Delcher A.L."/>
            <person name="Huson D.H."/>
            <person name="Kravitz S.A."/>
            <person name="Mouchard L."/>
            <person name="Reinert K."/>
            <person name="Remington K.A."/>
            <person name="Clark A.G."/>
            <person name="Waterman M.S."/>
            <person name="Eichler E.E."/>
            <person name="Adams M.D."/>
            <person name="Hunkapiller M.W."/>
            <person name="Myers E.W."/>
            <person name="Venter J.C."/>
        </authorList>
    </citation>
    <scope>NUCLEOTIDE SEQUENCE [LARGE SCALE GENOMIC DNA]</scope>
</reference>
<reference key="8">
    <citation type="journal article" date="2004" name="Genome Res.">
        <title>The status, quality, and expansion of the NIH full-length cDNA project: the Mammalian Gene Collection (MGC).</title>
        <authorList>
            <consortium name="The MGC Project Team"/>
        </authorList>
    </citation>
    <scope>NUCLEOTIDE SEQUENCE [LARGE SCALE MRNA] (ISOFORM 1)</scope>
    <scope>VARIANT GLN-69</scope>
    <source>
        <tissue>Lymph</tissue>
        <tissue>Uterus</tissue>
    </source>
</reference>
<reference key="9">
    <citation type="journal article" date="2003" name="Nat. Biotechnol.">
        <title>Exploring proteomes and analyzing protein processing by mass spectrometric identification of sorted N-terminal peptides.</title>
        <authorList>
            <person name="Gevaert K."/>
            <person name="Goethals M."/>
            <person name="Martens L."/>
            <person name="Van Damme J."/>
            <person name="Staes A."/>
            <person name="Thomas G.R."/>
            <person name="Vandekerckhove J."/>
        </authorList>
    </citation>
    <scope>PROTEIN SEQUENCE OF 2-12 (ISOFORMS 1/2)</scope>
    <source>
        <tissue>Platelet</tissue>
    </source>
</reference>
<reference key="10">
    <citation type="submission" date="2006-02" db="UniProtKB">
        <authorList>
            <person name="Bienvenut W.V."/>
            <person name="Claeys D."/>
        </authorList>
    </citation>
    <scope>PROTEIN SEQUENCE OF 2-12; 41-57; 79-154 AND 161-196 (ISOFORMS 1/2)</scope>
    <scope>CLEAVAGE OF INITIATOR METHIONINE</scope>
    <scope>ACETYLATION AT ALA-2</scope>
    <scope>IDENTIFICATION BY MASS SPECTROMETRY</scope>
    <source>
        <tissue>Platelet</tissue>
    </source>
</reference>
<reference key="11">
    <citation type="journal article" date="2008" name="J. Proteome Res.">
        <title>Phosphoproteome of resting human platelets.</title>
        <authorList>
            <person name="Zahedi R.P."/>
            <person name="Lewandrowski U."/>
            <person name="Wiesner J."/>
            <person name="Wortelkamp S."/>
            <person name="Moebius J."/>
            <person name="Schuetz C."/>
            <person name="Walter U."/>
            <person name="Gambaryan S."/>
            <person name="Sickmann A."/>
        </authorList>
    </citation>
    <scope>PHOSPHORYLATION [LARGE SCALE ANALYSIS] AT SER-163</scope>
    <scope>IDENTIFICATION BY MASS SPECTROMETRY [LARGE SCALE ANALYSIS]</scope>
    <source>
        <tissue>Platelet</tissue>
    </source>
</reference>
<reference key="12">
    <citation type="journal article" date="2008" name="Proc. Natl. Acad. Sci. U.S.A.">
        <title>A quantitative atlas of mitotic phosphorylation.</title>
        <authorList>
            <person name="Dephoure N."/>
            <person name="Zhou C."/>
            <person name="Villen J."/>
            <person name="Beausoleil S.A."/>
            <person name="Bakalarski C.E."/>
            <person name="Elledge S.J."/>
            <person name="Gygi S.P."/>
        </authorList>
    </citation>
    <scope>IDENTIFICATION BY MASS SPECTROMETRY [LARGE SCALE ANALYSIS]</scope>
    <source>
        <tissue>Cervix carcinoma</tissue>
    </source>
</reference>
<reference key="13">
    <citation type="journal article" date="2009" name="Anal. Chem.">
        <title>Lys-N and trypsin cover complementary parts of the phosphoproteome in a refined SCX-based approach.</title>
        <authorList>
            <person name="Gauci S."/>
            <person name="Helbig A.O."/>
            <person name="Slijper M."/>
            <person name="Krijgsveld J."/>
            <person name="Heck A.J."/>
            <person name="Mohammed S."/>
        </authorList>
    </citation>
    <scope>ACETYLATION [LARGE SCALE ANALYSIS] AT ALA-2</scope>
    <scope>CLEAVAGE OF INITIATOR METHIONINE [LARGE SCALE ANALYSIS]</scope>
    <scope>IDENTIFICATION BY MASS SPECTROMETRY [LARGE SCALE ANALYSIS]</scope>
</reference>
<reference key="14">
    <citation type="journal article" date="2009" name="Sci. Signal.">
        <title>Quantitative phosphoproteomic analysis of T cell receptor signaling reveals system-wide modulation of protein-protein interactions.</title>
        <authorList>
            <person name="Mayya V."/>
            <person name="Lundgren D.H."/>
            <person name="Hwang S.-I."/>
            <person name="Rezaul K."/>
            <person name="Wu L."/>
            <person name="Eng J.K."/>
            <person name="Rodionov V."/>
            <person name="Han D.K."/>
        </authorList>
    </citation>
    <scope>PHOSPHORYLATION [LARGE SCALE ANALYSIS] AT SER-163</scope>
    <scope>IDENTIFICATION BY MASS SPECTROMETRY [LARGE SCALE ANALYSIS]</scope>
    <source>
        <tissue>Leukemic T-cell</tissue>
    </source>
</reference>
<reference key="15">
    <citation type="journal article" date="2009" name="Science">
        <title>Lysine acetylation targets protein complexes and co-regulates major cellular functions.</title>
        <authorList>
            <person name="Choudhary C."/>
            <person name="Kumar C."/>
            <person name="Gnad F."/>
            <person name="Nielsen M.L."/>
            <person name="Rehman M."/>
            <person name="Walther T.C."/>
            <person name="Olsen J.V."/>
            <person name="Mann M."/>
        </authorList>
    </citation>
    <scope>ACETYLATION [LARGE SCALE ANALYSIS] AT LYS-17 AND LYS-20</scope>
    <scope>IDENTIFICATION BY MASS SPECTROMETRY [LARGE SCALE ANALYSIS]</scope>
</reference>
<reference key="16">
    <citation type="journal article" date="2010" name="Sci. Signal.">
        <title>Quantitative phosphoproteomics reveals widespread full phosphorylation site occupancy during mitosis.</title>
        <authorList>
            <person name="Olsen J.V."/>
            <person name="Vermeulen M."/>
            <person name="Santamaria A."/>
            <person name="Kumar C."/>
            <person name="Miller M.L."/>
            <person name="Jensen L.J."/>
            <person name="Gnad F."/>
            <person name="Cox J."/>
            <person name="Jensen T.S."/>
            <person name="Nigg E.A."/>
            <person name="Brunak S."/>
            <person name="Mann M."/>
        </authorList>
    </citation>
    <scope>PHOSPHORYLATION [LARGE SCALE ANALYSIS] AT SER-163</scope>
    <scope>IDENTIFICATION BY MASS SPECTROMETRY [LARGE SCALE ANALYSIS]</scope>
    <source>
        <tissue>Cervix carcinoma</tissue>
    </source>
</reference>
<reference key="17">
    <citation type="journal article" date="2011" name="BMC Syst. Biol.">
        <title>Initial characterization of the human central proteome.</title>
        <authorList>
            <person name="Burkard T.R."/>
            <person name="Planyavsky M."/>
            <person name="Kaupe I."/>
            <person name="Breitwieser F.P."/>
            <person name="Buerckstuemmer T."/>
            <person name="Bennett K.L."/>
            <person name="Superti-Furga G."/>
            <person name="Colinge J."/>
        </authorList>
    </citation>
    <scope>IDENTIFICATION BY MASS SPECTROMETRY [LARGE SCALE ANALYSIS]</scope>
</reference>
<reference key="18">
    <citation type="journal article" date="2011" name="Sci. Signal.">
        <title>System-wide temporal characterization of the proteome and phosphoproteome of human embryonic stem cell differentiation.</title>
        <authorList>
            <person name="Rigbolt K.T."/>
            <person name="Prokhorova T.A."/>
            <person name="Akimov V."/>
            <person name="Henningsen J."/>
            <person name="Johansen P.T."/>
            <person name="Kratchmarova I."/>
            <person name="Kassem M."/>
            <person name="Mann M."/>
            <person name="Olsen J.V."/>
            <person name="Blagoev B."/>
        </authorList>
    </citation>
    <scope>PHOSPHORYLATION [LARGE SCALE ANALYSIS] AT SER-163</scope>
    <scope>IDENTIFICATION BY MASS SPECTROMETRY [LARGE SCALE ANALYSIS]</scope>
</reference>
<reference key="19">
    <citation type="journal article" date="2013" name="J. Proteome Res.">
        <title>Toward a comprehensive characterization of a human cancer cell phosphoproteome.</title>
        <authorList>
            <person name="Zhou H."/>
            <person name="Di Palma S."/>
            <person name="Preisinger C."/>
            <person name="Peng M."/>
            <person name="Polat A.N."/>
            <person name="Heck A.J."/>
            <person name="Mohammed S."/>
        </authorList>
    </citation>
    <scope>PHOSPHORYLATION [LARGE SCALE ANALYSIS] AT SER-11; SER-163 AND THR-180</scope>
    <scope>IDENTIFICATION BY MASS SPECTROMETRY [LARGE SCALE ANALYSIS]</scope>
    <source>
        <tissue>Cervix carcinoma</tissue>
        <tissue>Erythroleukemia</tissue>
    </source>
</reference>
<reference key="20">
    <citation type="journal article" date="2014" name="J. Proteomics">
        <title>An enzyme assisted RP-RPLC approach for in-depth analysis of human liver phosphoproteome.</title>
        <authorList>
            <person name="Bian Y."/>
            <person name="Song C."/>
            <person name="Cheng K."/>
            <person name="Dong M."/>
            <person name="Wang F."/>
            <person name="Huang J."/>
            <person name="Sun D."/>
            <person name="Wang L."/>
            <person name="Ye M."/>
            <person name="Zou H."/>
        </authorList>
    </citation>
    <scope>IDENTIFICATION BY MASS SPECTROMETRY [LARGE SCALE ANALYSIS]</scope>
    <source>
        <tissue>Liver</tissue>
    </source>
</reference>
<reference key="21">
    <citation type="journal article" date="2014" name="Mol. Cell. Proteomics">
        <title>Immunoaffinity enrichment and mass spectrometry analysis of protein methylation.</title>
        <authorList>
            <person name="Guo A."/>
            <person name="Gu H."/>
            <person name="Zhou J."/>
            <person name="Mulhern D."/>
            <person name="Wang Y."/>
            <person name="Lee K.A."/>
            <person name="Yang V."/>
            <person name="Aguiar M."/>
            <person name="Kornhauser J."/>
            <person name="Jia X."/>
            <person name="Ren J."/>
            <person name="Beausoleil S.A."/>
            <person name="Silva J.C."/>
            <person name="Vemulapalli V."/>
            <person name="Bedford M.T."/>
            <person name="Comb M.J."/>
        </authorList>
    </citation>
    <scope>METHYLATION [LARGE SCALE ANALYSIS] AT ARG-182 AND ARG-196</scope>
    <scope>IDENTIFICATION BY MASS SPECTROMETRY [LARGE SCALE ANALYSIS]</scope>
    <source>
        <tissue>Colon carcinoma</tissue>
    </source>
</reference>
<reference key="22">
    <citation type="journal article" date="2015" name="Proteomics">
        <title>N-terminome analysis of the human mitochondrial proteome.</title>
        <authorList>
            <person name="Vaca Jacome A.S."/>
            <person name="Rabilloud T."/>
            <person name="Schaeffer-Reiss C."/>
            <person name="Rompais M."/>
            <person name="Ayoub D."/>
            <person name="Lane L."/>
            <person name="Bairoch A."/>
            <person name="Van Dorsselaer A."/>
            <person name="Carapito C."/>
        </authorList>
    </citation>
    <scope>IDENTIFICATION BY MASS SPECTROMETRY [LARGE SCALE ANALYSIS]</scope>
</reference>
<reference key="23">
    <citation type="journal article" date="2017" name="Nat. Struct. Mol. Biol.">
        <title>Site-specific mapping of the human SUMO proteome reveals co-modification with phosphorylation.</title>
        <authorList>
            <person name="Hendriks I.A."/>
            <person name="Lyon D."/>
            <person name="Young C."/>
            <person name="Jensen L.J."/>
            <person name="Vertegaal A.C."/>
            <person name="Nielsen M.L."/>
        </authorList>
    </citation>
    <scope>SUMOYLATION [LARGE SCALE ANALYSIS] AT LYS-171</scope>
    <scope>IDENTIFICATION BY MASS SPECTROMETRY [LARGE SCALE ANALYSIS]</scope>
</reference>
<reference key="24">
    <citation type="submission" date="2005-08" db="PDB data bank">
        <title>Solution structure of the CH domain of human transgelin-2.</title>
        <authorList>
            <consortium name="RIKEN structural genomics initiative (RSGI)"/>
        </authorList>
    </citation>
    <scope>STRUCTURE BY NMR OF 16-157</scope>
</reference>
<proteinExistence type="evidence at protein level"/>
<name>TAGL2_HUMAN</name>
<evidence type="ECO:0000255" key="1">
    <source>
        <dbReference type="PROSITE-ProRule" id="PRU00044"/>
    </source>
</evidence>
<evidence type="ECO:0000269" key="2">
    <source>
    </source>
</evidence>
<evidence type="ECO:0000269" key="3">
    <source>
    </source>
</evidence>
<evidence type="ECO:0000269" key="4">
    <source ref="10"/>
</evidence>
<evidence type="ECO:0000303" key="5">
    <source ref="1"/>
</evidence>
<evidence type="ECO:0000305" key="6"/>
<evidence type="ECO:0007744" key="7">
    <source>
    </source>
</evidence>
<evidence type="ECO:0007744" key="8">
    <source>
    </source>
</evidence>
<evidence type="ECO:0007744" key="9">
    <source>
    </source>
</evidence>
<evidence type="ECO:0007744" key="10">
    <source>
    </source>
</evidence>
<evidence type="ECO:0007744" key="11">
    <source>
    </source>
</evidence>
<evidence type="ECO:0007744" key="12">
    <source>
    </source>
</evidence>
<evidence type="ECO:0007744" key="13">
    <source>
    </source>
</evidence>
<evidence type="ECO:0007744" key="14">
    <source>
    </source>
</evidence>
<evidence type="ECO:0007744" key="15">
    <source>
    </source>
</evidence>
<evidence type="ECO:0007829" key="16">
    <source>
        <dbReference type="PDB" id="1WYM"/>
    </source>
</evidence>
<sequence>MANRGPAYGLSREVQQKIEKQYDADLEQILIQWITTQCRKDVGRPQPGRENFQNWLKDGTVLCELINALYPEGQAPVKKIQASTMAFKQMEQISQFLQAAERYGINTTDIFQTVDLWEGKNMACVQRTLMNLGGLAVARDDGLFSGDPNWFPKKSKENPRNFSDNQLQEGKNVIGLQMGTNRGASQAGMTGYGMPRQIL</sequence>
<accession>P37802</accession>
<accession>E9KL39</accession>
<accession>Q5JRQ6</accession>
<accession>Q5JRQ7</accession>
<accession>Q6FGI1</accession>
<accession>Q9BUH5</accession>
<accession>Q9H4P0</accession>
<organism>
    <name type="scientific">Homo sapiens</name>
    <name type="common">Human</name>
    <dbReference type="NCBI Taxonomy" id="9606"/>
    <lineage>
        <taxon>Eukaryota</taxon>
        <taxon>Metazoa</taxon>
        <taxon>Chordata</taxon>
        <taxon>Craniata</taxon>
        <taxon>Vertebrata</taxon>
        <taxon>Euteleostomi</taxon>
        <taxon>Mammalia</taxon>
        <taxon>Eutheria</taxon>
        <taxon>Euarchontoglires</taxon>
        <taxon>Primates</taxon>
        <taxon>Haplorrhini</taxon>
        <taxon>Catarrhini</taxon>
        <taxon>Hominidae</taxon>
        <taxon>Homo</taxon>
    </lineage>
</organism>
<comment type="interaction">
    <interactant intactId="EBI-1056740">
        <id>P37802</id>
    </interactant>
    <interactant intactId="EBI-353944">
        <id>P60709</id>
        <label>ACTB</label>
    </interactant>
    <organismsDiffer>false</organismsDiffer>
    <experiments>3</experiments>
</comment>
<comment type="interaction">
    <interactant intactId="EBI-1056740">
        <id>P37802</id>
    </interactant>
    <interactant intactId="EBI-10968534">
        <id>P50570-2</id>
        <label>DNM2</label>
    </interactant>
    <organismsDiffer>false</organismsDiffer>
    <experiments>3</experiments>
</comment>
<comment type="interaction">
    <interactant intactId="EBI-1056740">
        <id>P37802</id>
    </interactant>
    <interactant intactId="EBI-11110431">
        <id>Q8TB36</id>
        <label>GDAP1</label>
    </interactant>
    <organismsDiffer>false</organismsDiffer>
    <experiments>3</experiments>
</comment>
<comment type="interaction">
    <interactant intactId="EBI-1056740">
        <id>P37802</id>
    </interactant>
    <interactant intactId="EBI-466029">
        <id>P42858</id>
        <label>HTT</label>
    </interactant>
    <organismsDiffer>false</organismsDiffer>
    <experiments>3</experiments>
</comment>
<comment type="interaction">
    <interactant intactId="EBI-1056740">
        <id>P37802</id>
    </interactant>
    <interactant intactId="EBI-395421">
        <id>Q16637</id>
        <label>SMN2</label>
    </interactant>
    <organismsDiffer>false</organismsDiffer>
    <experiments>3</experiments>
</comment>
<comment type="interaction">
    <interactant intactId="EBI-1056740">
        <id>P37802</id>
    </interactant>
    <interactant intactId="EBI-21901041">
        <id>Q9UI15</id>
        <label>TAGLN3</label>
    </interactant>
    <organismsDiffer>false</organismsDiffer>
    <experiments>3</experiments>
</comment>
<comment type="alternative products">
    <event type="alternative splicing"/>
    <isoform>
        <id>P37802-1</id>
        <name>1</name>
        <sequence type="displayed"/>
    </isoform>
    <isoform>
        <id>P37802-2</id>
        <name>2</name>
        <sequence type="described" ref="VSP_055311"/>
    </isoform>
</comment>
<comment type="tissue specificity">
    <text evidence="3">Expressed in epididymis (at protein level).</text>
</comment>
<comment type="similarity">
    <text evidence="6">Belongs to the calponin family.</text>
</comment>
<comment type="sequence caution" evidence="6">
    <conflict type="erroneous initiation">
        <sequence resource="EMBL-CDS" id="BAA04802"/>
    </conflict>
</comment>
<feature type="initiator methionine" description="Removed" evidence="4 8">
    <location>
        <position position="1"/>
    </location>
</feature>
<feature type="chain" id="PRO_0000204786" description="Transgelin-2">
    <location>
        <begin position="2"/>
        <end position="199"/>
    </location>
</feature>
<feature type="domain" description="Calponin-homology (CH)" evidence="1">
    <location>
        <begin position="24"/>
        <end position="136"/>
    </location>
</feature>
<feature type="repeat" description="Calponin-like">
    <location>
        <begin position="174"/>
        <end position="199"/>
    </location>
</feature>
<feature type="modified residue" description="N-acetylalanine" evidence="4 8">
    <location>
        <position position="2"/>
    </location>
</feature>
<feature type="modified residue" description="Phosphoserine" evidence="13">
    <location>
        <position position="11"/>
    </location>
</feature>
<feature type="modified residue" description="N6-acetyllysine" evidence="9">
    <location>
        <position position="17"/>
    </location>
</feature>
<feature type="modified residue" description="N6-acetyllysine" evidence="9">
    <location>
        <position position="20"/>
    </location>
</feature>
<feature type="modified residue" description="Phosphoserine" evidence="7 10 11 12 13">
    <location>
        <position position="163"/>
    </location>
</feature>
<feature type="modified residue" description="Phosphothreonine" evidence="13">
    <location>
        <position position="180"/>
    </location>
</feature>
<feature type="modified residue" description="Omega-N-methylarginine" evidence="14">
    <location>
        <position position="182"/>
    </location>
</feature>
<feature type="modified residue" description="Omega-N-methylarginine" evidence="14">
    <location>
        <position position="196"/>
    </location>
</feature>
<feature type="cross-link" description="Glycyl lysine isopeptide (Lys-Gly) (interchain with G-Cter in SUMO2)" evidence="15">
    <location>
        <position position="171"/>
    </location>
</feature>
<feature type="splice variant" id="VSP_055311" description="In isoform 2." evidence="5">
    <original>M</original>
    <variation>MSAFSLALALVSSPQPPPPIGM</variation>
    <location>
        <position position="1"/>
    </location>
</feature>
<feature type="sequence variant" id="VAR_047903" description="In dbSNP:rs17849636." evidence="2">
    <original>L</original>
    <variation>Q</variation>
    <location>
        <position position="69"/>
    </location>
</feature>
<feature type="helix" evidence="16">
    <location>
        <begin position="24"/>
        <end position="37"/>
    </location>
</feature>
<feature type="strand" evidence="16">
    <location>
        <begin position="38"/>
        <end position="40"/>
    </location>
</feature>
<feature type="helix" evidence="16">
    <location>
        <begin position="49"/>
        <end position="57"/>
    </location>
</feature>
<feature type="helix" evidence="16">
    <location>
        <begin position="60"/>
        <end position="69"/>
    </location>
</feature>
<feature type="turn" evidence="16">
    <location>
        <begin position="72"/>
        <end position="74"/>
    </location>
</feature>
<feature type="helix" evidence="16">
    <location>
        <begin position="86"/>
        <end position="103"/>
    </location>
</feature>
<feature type="turn" evidence="16">
    <location>
        <begin position="107"/>
        <end position="109"/>
    </location>
</feature>
<feature type="helix" evidence="16">
    <location>
        <begin position="113"/>
        <end position="117"/>
    </location>
</feature>
<feature type="helix" evidence="16">
    <location>
        <begin position="122"/>
        <end position="136"/>
    </location>
</feature>
<feature type="strand" evidence="16">
    <location>
        <begin position="140"/>
        <end position="142"/>
    </location>
</feature>
<feature type="strand" evidence="16">
    <location>
        <begin position="148"/>
        <end position="151"/>
    </location>
</feature>
<protein>
    <recommendedName>
        <fullName>Transgelin-2</fullName>
    </recommendedName>
    <alternativeName>
        <fullName>Epididymis tissue protein Li 7e</fullName>
    </alternativeName>
    <alternativeName>
        <fullName>SM22-alpha homolog</fullName>
    </alternativeName>
</protein>
<keyword id="KW-0002">3D-structure</keyword>
<keyword id="KW-0007">Acetylation</keyword>
<keyword id="KW-0025">Alternative splicing</keyword>
<keyword id="KW-0903">Direct protein sequencing</keyword>
<keyword id="KW-1017">Isopeptide bond</keyword>
<keyword id="KW-0488">Methylation</keyword>
<keyword id="KW-0597">Phosphoprotein</keyword>
<keyword id="KW-1267">Proteomics identification</keyword>
<keyword id="KW-1185">Reference proteome</keyword>
<keyword id="KW-0832">Ubl conjugation</keyword>